<comment type="function">
    <text evidence="1">Part of the Sec protein translocase complex. Interacts with the SecYEG preprotein conducting channel. Has a central role in coupling the hydrolysis of ATP to the transfer of proteins into and across the cell membrane, serving both as a receptor for the preprotein-SecB complex and as an ATP-driven molecular motor driving the stepwise translocation of polypeptide chains across the membrane.</text>
</comment>
<comment type="catalytic activity">
    <reaction evidence="1">
        <text>ATP + H2O + cellular proteinSide 1 = ADP + phosphate + cellular proteinSide 2.</text>
        <dbReference type="EC" id="7.4.2.8"/>
    </reaction>
</comment>
<comment type="cofactor">
    <cofactor evidence="1">
        <name>Zn(2+)</name>
        <dbReference type="ChEBI" id="CHEBI:29105"/>
    </cofactor>
    <text evidence="1">May bind 1 zinc ion per subunit.</text>
</comment>
<comment type="subunit">
    <text evidence="1">Monomer and homodimer. Part of the essential Sec protein translocation apparatus which comprises SecA, SecYEG and auxiliary proteins SecDF-YajC and YidC.</text>
</comment>
<comment type="subcellular location">
    <subcellularLocation>
        <location evidence="1">Cell inner membrane</location>
        <topology evidence="1">Peripheral membrane protein</topology>
        <orientation evidence="1">Cytoplasmic side</orientation>
    </subcellularLocation>
    <subcellularLocation>
        <location evidence="1">Cytoplasm</location>
    </subcellularLocation>
    <text evidence="1">Distribution is 50-50.</text>
</comment>
<comment type="similarity">
    <text evidence="1">Belongs to the SecA family.</text>
</comment>
<sequence>MIGAFARKLFGSSNDRRIKAYQARVAAINALEPDVAALSDEALRARTDQFRAELAAGKTLDDLLIPAFATVREAAKRTLGQRHFDVQLIGGMVLHEGDIAEMKTGEGKTLVATLACYLNALAGKGVHVVTVNDYLASRDAGWMGQIYAFLGMSTGVIVHGLDDSQRQKAYACDITYGTNNEYGFDYLRDNMKYRLEDMAQRGHFFAIVDEVDSILIDEARTPLIISGPLDDRSEFYNTIDTFIPRLDKSDYDVDEKQRSVALTEAGMEKIETLLRDAGQLKGESLYDIENVSVVHHINQALRAHTLFQRDKDYIVRNDEVVIIDEFTGRMMQGRRYSEGLHQALEAKEHVTVQPENQTLASITFQNYFRMYGKLAGMTGTAATEADEFYDIYKLEVVEIPTNVTIARLDEDDEVYRTQTEKYAAILAEVERANKRLQPVLVGTASIEKSEVLADVLLKSGYKQIDFGDPKALEKLYAAARAGKPAKLFAVLNARFHEQEAYIVAEAGVPGAITIATNMAGRGTDIKLGGSLEMRIQQETADITDEAEKAARIEQIKADIERFRQIVLNAEDEVEIEPAKGNKPAKTAKRPGGLYIIGSERHESRRIDNQLRGRSGRQGDPGRSKFFLSLEDDLMRIFGSGKLDTMLTRLGLKEGEAIIHPWINKALEKAQQKVEARNFDIRKNLLKFDDVQNDQRKVIFDQRIELMKEDSVVETVTDMRHTFIEDLVSKHVPEHAYAEQWDVAGLKEELNRVVGLDIPVDEWAKEEGIADEELLVRLEKVFDEHMAAKVAQWGPDVMRYAEKSILLQTLDHLWREHLVMLDHLRQVIGLRGYGQRDPLQEYKSEAFNLFQEMSAHLREAVTAQLMRVEIIPPEQPRELPPMEVHKMDPNTGEDEMQFANVSLAPADTVEKSERDPNRPESWGKVGRNEDCPCGSGKKYKHCHGRYA</sequence>
<keyword id="KW-0067">ATP-binding</keyword>
<keyword id="KW-0997">Cell inner membrane</keyword>
<keyword id="KW-1003">Cell membrane</keyword>
<keyword id="KW-0963">Cytoplasm</keyword>
<keyword id="KW-0472">Membrane</keyword>
<keyword id="KW-0479">Metal-binding</keyword>
<keyword id="KW-0547">Nucleotide-binding</keyword>
<keyword id="KW-0653">Protein transport</keyword>
<keyword id="KW-1278">Translocase</keyword>
<keyword id="KW-0811">Translocation</keyword>
<keyword id="KW-0813">Transport</keyword>
<keyword id="KW-0862">Zinc</keyword>
<accession>Q13EF2</accession>
<protein>
    <recommendedName>
        <fullName evidence="1">Protein translocase subunit SecA</fullName>
        <ecNumber evidence="1">7.4.2.8</ecNumber>
    </recommendedName>
</protein>
<gene>
    <name evidence="1" type="primary">secA</name>
    <name type="ordered locus">RPD_0299</name>
</gene>
<organism>
    <name type="scientific">Rhodopseudomonas palustris (strain BisB5)</name>
    <dbReference type="NCBI Taxonomy" id="316057"/>
    <lineage>
        <taxon>Bacteria</taxon>
        <taxon>Pseudomonadati</taxon>
        <taxon>Pseudomonadota</taxon>
        <taxon>Alphaproteobacteria</taxon>
        <taxon>Hyphomicrobiales</taxon>
        <taxon>Nitrobacteraceae</taxon>
        <taxon>Rhodopseudomonas</taxon>
    </lineage>
</organism>
<dbReference type="EC" id="7.4.2.8" evidence="1"/>
<dbReference type="EMBL" id="CP000283">
    <property type="protein sequence ID" value="ABE37537.1"/>
    <property type="molecule type" value="Genomic_DNA"/>
</dbReference>
<dbReference type="SMR" id="Q13EF2"/>
<dbReference type="STRING" id="316057.RPD_0299"/>
<dbReference type="KEGG" id="rpd:RPD_0299"/>
<dbReference type="eggNOG" id="COG0653">
    <property type="taxonomic scope" value="Bacteria"/>
</dbReference>
<dbReference type="HOGENOM" id="CLU_005314_3_0_5"/>
<dbReference type="BioCyc" id="RPAL316057:RPD_RS01520-MONOMER"/>
<dbReference type="Proteomes" id="UP000001818">
    <property type="component" value="Chromosome"/>
</dbReference>
<dbReference type="GO" id="GO:0031522">
    <property type="term" value="C:cell envelope Sec protein transport complex"/>
    <property type="evidence" value="ECO:0007669"/>
    <property type="project" value="TreeGrafter"/>
</dbReference>
<dbReference type="GO" id="GO:0005829">
    <property type="term" value="C:cytosol"/>
    <property type="evidence" value="ECO:0007669"/>
    <property type="project" value="TreeGrafter"/>
</dbReference>
<dbReference type="GO" id="GO:0005886">
    <property type="term" value="C:plasma membrane"/>
    <property type="evidence" value="ECO:0007669"/>
    <property type="project" value="UniProtKB-SubCell"/>
</dbReference>
<dbReference type="GO" id="GO:0005524">
    <property type="term" value="F:ATP binding"/>
    <property type="evidence" value="ECO:0007669"/>
    <property type="project" value="UniProtKB-UniRule"/>
</dbReference>
<dbReference type="GO" id="GO:0046872">
    <property type="term" value="F:metal ion binding"/>
    <property type="evidence" value="ECO:0007669"/>
    <property type="project" value="UniProtKB-KW"/>
</dbReference>
<dbReference type="GO" id="GO:0008564">
    <property type="term" value="F:protein-exporting ATPase activity"/>
    <property type="evidence" value="ECO:0007669"/>
    <property type="project" value="UniProtKB-EC"/>
</dbReference>
<dbReference type="GO" id="GO:0065002">
    <property type="term" value="P:intracellular protein transmembrane transport"/>
    <property type="evidence" value="ECO:0007669"/>
    <property type="project" value="UniProtKB-UniRule"/>
</dbReference>
<dbReference type="GO" id="GO:0017038">
    <property type="term" value="P:protein import"/>
    <property type="evidence" value="ECO:0007669"/>
    <property type="project" value="InterPro"/>
</dbReference>
<dbReference type="GO" id="GO:0006605">
    <property type="term" value="P:protein targeting"/>
    <property type="evidence" value="ECO:0007669"/>
    <property type="project" value="UniProtKB-UniRule"/>
</dbReference>
<dbReference type="GO" id="GO:0043952">
    <property type="term" value="P:protein transport by the Sec complex"/>
    <property type="evidence" value="ECO:0007669"/>
    <property type="project" value="TreeGrafter"/>
</dbReference>
<dbReference type="CDD" id="cd17928">
    <property type="entry name" value="DEXDc_SecA"/>
    <property type="match status" value="1"/>
</dbReference>
<dbReference type="CDD" id="cd18803">
    <property type="entry name" value="SF2_C_secA"/>
    <property type="match status" value="1"/>
</dbReference>
<dbReference type="FunFam" id="3.90.1440.10:FF:000001">
    <property type="entry name" value="Preprotein translocase subunit SecA"/>
    <property type="match status" value="1"/>
</dbReference>
<dbReference type="FunFam" id="1.10.3060.10:FF:000003">
    <property type="entry name" value="Protein translocase subunit SecA"/>
    <property type="match status" value="1"/>
</dbReference>
<dbReference type="FunFam" id="3.40.50.300:FF:000334">
    <property type="entry name" value="Protein translocase subunit SecA"/>
    <property type="match status" value="1"/>
</dbReference>
<dbReference type="FunFam" id="3.40.50.300:FF:001790">
    <property type="entry name" value="Protein translocase subunit SecA"/>
    <property type="match status" value="1"/>
</dbReference>
<dbReference type="Gene3D" id="3.10.450.50">
    <property type="match status" value="1"/>
</dbReference>
<dbReference type="Gene3D" id="1.10.3060.10">
    <property type="entry name" value="Helical scaffold and wing domains of SecA"/>
    <property type="match status" value="1"/>
</dbReference>
<dbReference type="Gene3D" id="3.40.50.300">
    <property type="entry name" value="P-loop containing nucleotide triphosphate hydrolases"/>
    <property type="match status" value="2"/>
</dbReference>
<dbReference type="Gene3D" id="3.90.1440.10">
    <property type="entry name" value="SecA, preprotein cross-linking domain"/>
    <property type="match status" value="1"/>
</dbReference>
<dbReference type="HAMAP" id="MF_01382">
    <property type="entry name" value="SecA"/>
    <property type="match status" value="1"/>
</dbReference>
<dbReference type="InterPro" id="IPR014001">
    <property type="entry name" value="Helicase_ATP-bd"/>
</dbReference>
<dbReference type="InterPro" id="IPR027417">
    <property type="entry name" value="P-loop_NTPase"/>
</dbReference>
<dbReference type="InterPro" id="IPR004027">
    <property type="entry name" value="SEC_C_motif"/>
</dbReference>
<dbReference type="InterPro" id="IPR000185">
    <property type="entry name" value="SecA"/>
</dbReference>
<dbReference type="InterPro" id="IPR020937">
    <property type="entry name" value="SecA_CS"/>
</dbReference>
<dbReference type="InterPro" id="IPR011115">
    <property type="entry name" value="SecA_DEAD"/>
</dbReference>
<dbReference type="InterPro" id="IPR014018">
    <property type="entry name" value="SecA_motor_DEAD"/>
</dbReference>
<dbReference type="InterPro" id="IPR011130">
    <property type="entry name" value="SecA_preprotein_X-link_dom"/>
</dbReference>
<dbReference type="InterPro" id="IPR044722">
    <property type="entry name" value="SecA_SF2_C"/>
</dbReference>
<dbReference type="InterPro" id="IPR011116">
    <property type="entry name" value="SecA_Wing/Scaffold"/>
</dbReference>
<dbReference type="InterPro" id="IPR036266">
    <property type="entry name" value="SecA_Wing/Scaffold_sf"/>
</dbReference>
<dbReference type="InterPro" id="IPR036670">
    <property type="entry name" value="SecA_X-link_sf"/>
</dbReference>
<dbReference type="NCBIfam" id="NF009538">
    <property type="entry name" value="PRK12904.1"/>
    <property type="match status" value="1"/>
</dbReference>
<dbReference type="NCBIfam" id="TIGR00963">
    <property type="entry name" value="secA"/>
    <property type="match status" value="1"/>
</dbReference>
<dbReference type="PANTHER" id="PTHR30612:SF0">
    <property type="entry name" value="CHLOROPLAST PROTEIN-TRANSPORTING ATPASE"/>
    <property type="match status" value="1"/>
</dbReference>
<dbReference type="PANTHER" id="PTHR30612">
    <property type="entry name" value="SECA INNER MEMBRANE COMPONENT OF SEC PROTEIN SECRETION SYSTEM"/>
    <property type="match status" value="1"/>
</dbReference>
<dbReference type="Pfam" id="PF21090">
    <property type="entry name" value="P-loop_SecA"/>
    <property type="match status" value="1"/>
</dbReference>
<dbReference type="Pfam" id="PF02810">
    <property type="entry name" value="SEC-C"/>
    <property type="match status" value="1"/>
</dbReference>
<dbReference type="Pfam" id="PF07517">
    <property type="entry name" value="SecA_DEAD"/>
    <property type="match status" value="1"/>
</dbReference>
<dbReference type="Pfam" id="PF01043">
    <property type="entry name" value="SecA_PP_bind"/>
    <property type="match status" value="1"/>
</dbReference>
<dbReference type="Pfam" id="PF07516">
    <property type="entry name" value="SecA_SW"/>
    <property type="match status" value="1"/>
</dbReference>
<dbReference type="PRINTS" id="PR00906">
    <property type="entry name" value="SECA"/>
</dbReference>
<dbReference type="SMART" id="SM00957">
    <property type="entry name" value="SecA_DEAD"/>
    <property type="match status" value="1"/>
</dbReference>
<dbReference type="SMART" id="SM00958">
    <property type="entry name" value="SecA_PP_bind"/>
    <property type="match status" value="1"/>
</dbReference>
<dbReference type="SUPFAM" id="SSF81886">
    <property type="entry name" value="Helical scaffold and wing domains of SecA"/>
    <property type="match status" value="1"/>
</dbReference>
<dbReference type="SUPFAM" id="SSF52540">
    <property type="entry name" value="P-loop containing nucleoside triphosphate hydrolases"/>
    <property type="match status" value="2"/>
</dbReference>
<dbReference type="SUPFAM" id="SSF81767">
    <property type="entry name" value="Pre-protein crosslinking domain of SecA"/>
    <property type="match status" value="1"/>
</dbReference>
<dbReference type="PROSITE" id="PS01312">
    <property type="entry name" value="SECA"/>
    <property type="match status" value="1"/>
</dbReference>
<dbReference type="PROSITE" id="PS51196">
    <property type="entry name" value="SECA_MOTOR_DEAD"/>
    <property type="match status" value="1"/>
</dbReference>
<name>SECA_RHOPS</name>
<evidence type="ECO:0000255" key="1">
    <source>
        <dbReference type="HAMAP-Rule" id="MF_01382"/>
    </source>
</evidence>
<evidence type="ECO:0000256" key="2">
    <source>
        <dbReference type="SAM" id="MobiDB-lite"/>
    </source>
</evidence>
<reference key="1">
    <citation type="submission" date="2006-03" db="EMBL/GenBank/DDBJ databases">
        <title>Complete sequence of Rhodopseudomonas palustris BisB5.</title>
        <authorList>
            <consortium name="US DOE Joint Genome Institute"/>
            <person name="Copeland A."/>
            <person name="Lucas S."/>
            <person name="Lapidus A."/>
            <person name="Barry K."/>
            <person name="Detter J.C."/>
            <person name="Glavina del Rio T."/>
            <person name="Hammon N."/>
            <person name="Israni S."/>
            <person name="Dalin E."/>
            <person name="Tice H."/>
            <person name="Pitluck S."/>
            <person name="Chain P."/>
            <person name="Malfatti S."/>
            <person name="Shin M."/>
            <person name="Vergez L."/>
            <person name="Schmutz J."/>
            <person name="Larimer F."/>
            <person name="Land M."/>
            <person name="Hauser L."/>
            <person name="Pelletier D.A."/>
            <person name="Kyrpides N."/>
            <person name="Lykidis A."/>
            <person name="Oda Y."/>
            <person name="Harwood C.S."/>
            <person name="Richardson P."/>
        </authorList>
    </citation>
    <scope>NUCLEOTIDE SEQUENCE [LARGE SCALE GENOMIC DNA]</scope>
    <source>
        <strain>BisB5</strain>
    </source>
</reference>
<feature type="chain" id="PRO_0000320971" description="Protein translocase subunit SecA">
    <location>
        <begin position="1"/>
        <end position="946"/>
    </location>
</feature>
<feature type="region of interest" description="Disordered" evidence="2">
    <location>
        <begin position="872"/>
        <end position="892"/>
    </location>
</feature>
<feature type="region of interest" description="Disordered" evidence="2">
    <location>
        <begin position="904"/>
        <end position="946"/>
    </location>
</feature>
<feature type="compositionally biased region" description="Basic and acidic residues" evidence="2">
    <location>
        <begin position="907"/>
        <end position="917"/>
    </location>
</feature>
<feature type="compositionally biased region" description="Basic residues" evidence="2">
    <location>
        <begin position="936"/>
        <end position="946"/>
    </location>
</feature>
<feature type="binding site" evidence="1">
    <location>
        <position position="87"/>
    </location>
    <ligand>
        <name>ATP</name>
        <dbReference type="ChEBI" id="CHEBI:30616"/>
    </ligand>
</feature>
<feature type="binding site" evidence="1">
    <location>
        <begin position="105"/>
        <end position="109"/>
    </location>
    <ligand>
        <name>ATP</name>
        <dbReference type="ChEBI" id="CHEBI:30616"/>
    </ligand>
</feature>
<feature type="binding site" evidence="1">
    <location>
        <position position="524"/>
    </location>
    <ligand>
        <name>ATP</name>
        <dbReference type="ChEBI" id="CHEBI:30616"/>
    </ligand>
</feature>
<feature type="binding site" evidence="1">
    <location>
        <position position="930"/>
    </location>
    <ligand>
        <name>Zn(2+)</name>
        <dbReference type="ChEBI" id="CHEBI:29105"/>
    </ligand>
</feature>
<feature type="binding site" evidence="1">
    <location>
        <position position="932"/>
    </location>
    <ligand>
        <name>Zn(2+)</name>
        <dbReference type="ChEBI" id="CHEBI:29105"/>
    </ligand>
</feature>
<feature type="binding site" evidence="1">
    <location>
        <position position="941"/>
    </location>
    <ligand>
        <name>Zn(2+)</name>
        <dbReference type="ChEBI" id="CHEBI:29105"/>
    </ligand>
</feature>
<feature type="binding site" evidence="1">
    <location>
        <position position="942"/>
    </location>
    <ligand>
        <name>Zn(2+)</name>
        <dbReference type="ChEBI" id="CHEBI:29105"/>
    </ligand>
</feature>
<proteinExistence type="inferred from homology"/>